<comment type="function">
    <molecule>Reticulocyte-binding protein homolog 2a</molecule>
    <text evidence="5 7 8">During the asexual blood stage, binds to a chymotrypsin sensitive, neuraminidase and trypsin resistant receptor on the surface of the host erythrocyte (PubMed:21628513). Despite its binding capacity, appears to be dispensable for merozoite invasion of host erythrocytes (PubMed:12606570, PubMed:21698217).</text>
</comment>
<comment type="function">
    <molecule>Reticulocyte-binding protein homolog 2a 85 kDa form</molecule>
    <text evidence="8">During the asexual blood stage, binds to a trypsin-resistant and chymotrypsin and neuraminidase sensitive receptor on the surface of the host erythrocyte.</text>
</comment>
<comment type="subunit">
    <text evidence="8">Forms a heterodimer composed of the 285 kDa and the 85 kDa forms.</text>
</comment>
<comment type="subcellular location">
    <subcellularLocation>
        <location evidence="7 8">Cell membrane</location>
        <topology evidence="11">Single-pass type I membrane protein</topology>
    </subcellularLocation>
    <subcellularLocation>
        <location evidence="4 7">Cytoplasmic vesicle</location>
        <location evidence="4 7">Secretory vesicle</location>
        <location evidence="4 7">Rhoptry</location>
    </subcellularLocation>
    <subcellularLocation>
        <location evidence="7">Secreted</location>
    </subcellularLocation>
    <subcellularLocation>
        <location evidence="7">Cell junction</location>
        <location evidence="7">Tight junction</location>
    </subcellularLocation>
    <text evidence="4 7">Localizes to the rhoptry neck at the apical end of the merozoite (PubMed:12228308, PubMed:21628513). During merozoite invasion, mainly localizes to the tight junction formed between the parasite and the host erythrocyte membranes and then moves with the tight junction to the posterior end as the parasite enters the erythrocyte (PubMed:21628513). Also, the different processed forms are released from the membrane following proteolytic cleavage (PubMed:21628513).</text>
</comment>
<comment type="subcellular location">
    <molecule>Reticulocyte-binding protein homolog 2a 85 kDa form</molecule>
    <subcellularLocation>
        <location evidence="8">Secreted</location>
    </subcellularLocation>
    <subcellularLocation>
        <location evidence="8">Cell membrane</location>
        <topology evidence="8">Peripheral membrane protein</topology>
        <orientation evidence="8">Extracellular side</orientation>
    </subcellularLocation>
    <text evidence="8">In mature schizont, co-localizes to the apical end of the schizont and the merozoite with reticulocyte-binding protein homolog 2b 285 kDa form. During merozoite invasion, shed from the cell surface.</text>
</comment>
<comment type="subcellular location">
    <molecule>Reticulocyte-binding protein homolog 2a 285 kDa form</molecule>
    <subcellularLocation>
        <location evidence="8">Secreted</location>
    </subcellularLocation>
    <subcellularLocation>
        <location evidence="8">Cell membrane</location>
        <topology evidence="11">Single-pass type I membrane protein</topology>
    </subcellularLocation>
    <text evidence="8">In mature schizont, co-localizes to the apical end of the schizont and the merozoite with reticulocyte-binding protein homolog 2b 85 kDa form. During merozoite invasion, shed from the cell surface.</text>
</comment>
<comment type="developmental stage">
    <text evidence="4 5 7 8">Expressed during parasite asexual blood stages, specifically at the late schizont stage prior to merozoite release and in free merozoites (at protein level).</text>
</comment>
<comment type="PTM">
    <text evidence="4 7 8">Proteolytically processed into multiple fragments following schizont rupture (PubMed:12228308, PubMed:21628513, PubMed:21698217). In the mature schizont stage prior to merozoite release, full length RH2b is processed post-Golgi into C-terminal 285 kDa and N-terminal 85 kDa forms (PubMed:21628513, PubMed:21698217). During merozoite invasion of host erythrocytes, further processing occurs generating a 140 kDa C-terminal form (PubMed:21628513). At the same time, the C-terminal transmembrane region is probably cleaved, probably by a rhomboid protease, to shed all the different processed protein forms from the membrane leaving a transmembrane 7 kDa form on the merozoite surface (PubMed:21628513, PubMed:21698217).</text>
</comment>
<comment type="disruption phenotype">
    <text evidence="5">Does not affect merozoite invasion of host erythrocytes, either untreated or treated with neuraminidase, trypsin or chymotrypsin.</text>
</comment>
<comment type="biotechnology">
    <text evidence="6">Possible candidate for an effective malaria vaccine as determined by epitope response in sera.</text>
</comment>
<comment type="miscellaneous">
    <text evidence="4 5 11 12">RH2a expression levels greatly vary between isolates; levels are high in isolates 3D7, T996, HB3, D10, 7G8, K1, Pf120 and W2mef, and undetectable in isolates MCAMP, FCB1, T994 and FCR3 (PubMed:12228308, PubMed:12606570). A similar variation in expression affects other reticulocyte-binding proteins such as RH2b and RH1 (PubMed:12228308, PubMed:12606570). The expression pattern of RH1, RH2a and RH2b allows the strain to use different invasion pathways to enter erythrocytes (Probable). This provides a mechanism of phenotypic variation to evade host immune responses and to adapt to the polymorphic nature of the erythrocyte receptors in human populations (Probable).</text>
</comment>
<name>RH2A_PLAF7</name>
<sequence>MKTTLFCSISFCNIIFFFLELSHEHFVGQSSNTHGASSVTDFNFSEEKNLKSFEGKNNNNDNYASINRLYRKKPYMKRSLINLENDLFRLEPISYIQRYYKKNINRSDIFHNKKERGSKVYSNVSSFHSFIQEGKEEVEVFSIWGSNSVLDHIDVLRDNGTVVFSVQPYYLDIYTCKEAILFTTSFYKDLDKSSITKINEDIEKFNEEIIKNEEQCLVGGKTDFDNLLIVLENAEKANVRKTLFDNTFNDYKNKKSSFYNCLKNKKNDYDKKIKNIKNEITKLLKNIESTGNMCKTESYVMNNNLYLLRVNEVKSTPIDLYLNRAKELLESSSKLVNPIKMKLGDNKNMYSIGYIHDEIKDIIKRYNFHLKHIEKGKEYIKRITQANNIADKMKKDELIKKIFESSKHFASFKYSNEMISKLDSLFIKNEEILNNLFNNIFNIFKKKYETYVDMKTIESKYTTVMTLSEHLLEYAMDVLKANPQKPIDPKANLDSEVVKLQIKINEKSNELDNAISQVKTLIIIMKSFYDIIISEKASMDEMEKKELSLNNYIEKTDYILQTYNIFKSKSNIINNNSKNISSKYITIEGLKNDIDELNSLISYFKDSQETLIKDDELKKNMKTDYLNNVKYIEENVTHINEIILLKDSITQRIADIDELNSLNLININDFINEKNISQEKVSYNLNKLYKGSFEELESELSHFLDTKYLFHEKKSVNELQTILNTSNNECAKLNFMKSDNNNNNNNSNIINLLKTELSHLLSLKENIIKKLLNHIEQNIQNSSNKYTITYTDINNRMEDYKEEIESLEVYKHTIGNIQKEYILHLYENDKNALAVHNTSMQILQYKDAIQNIKNKISDDIKILKKYKEMNQDLLNYYEILDKKLKDNTYIKEMHTASLVQITQYIPYEDKTISELEQEFNNNNQKLDNILQDINAMNLNINILQTLNIGINACNTNNKNVEHLLNKKIELKNILNDQMKIIKNDDIIQDNEKENFSNVLKKEEEKLEKELDDIKFNNLKMDIHKLLNSYDHTKQNIESNLKINLDSFEKEKDSWVHFKSTIDSLYVEYNICNQKTHNTIKQQKNDIIELIYKRIKDINQEIIEKVDNYYSLSDKALTKLKSIHFNIDKEKYKNPKSQENIKLLEDRVMILEKKIKEDKDALIQIKNLSHDHFVNADNEKKKQKEKEEDDEQTHYSKKRKVMGDIYKDIKKNLDELNNKNLIDITLNEANKIESEYEKILIDDICEQITNEAKKSDTIKEKIESYKKDIDYVDVDVSKTRNDHHLNGDKIHDSFFYEDTLNYKAYFDKLKDLYENINKLTNESNGLKSDAHNNNTQVDKLKEINLQVFSNLGNIIKYVEKLENTLHELKDMYEFLETIDINKILKSIHNSMKKSEEYSNETKKIFEQSVNITNQFIEDVEILKTSINPNYESLNDDQIDDNIKSLVLKKEEISEKRKQVNKYITDIESNKEQSDLHLRYASRSIYVIDLFIKHEIINPSDGKNFDIIKVKEMINKTKQVSNEAMEYANKMDEKNKDIIKIENELYNLINNNIRSLKGVKYEKVRKQARNAIDDINNIHSNIKTILTKSKERLDEIKKQPNIKREGDVLNNDKTKIAYITIQINNGRIESNLLNILNMKHNIDTILNKAMDYMNDVSKSDQIVINIDSLNMNDIYNKDKDLLINILKEKQNMEAEYKKMNEMYNYVNETEKEIIKHKKNYEIRIMEHIKKETNEKKKKFMESNNKSLTTLMDSFRSMFYNEYINDYNINENFEKHQNILNEIYNGFNESYNIINTKMTEIINDNLDYNEIKEIKEVAQTEYDKLNKKVDELKNYLNNIKEQEGHRLIDYIKEKIFNLYIKCSEQQNIIDDSYNYITVKKQYIKTIEDVKFLLDSLNTIEEKNKSVANLEICTNKEDIKNLLKHVIKLANFSGIIVMSDTNTEITPENPLEDNDLLNLQLYFERKHEITSTLENDSDLELDHLGSNSDESIDNLKVYNDIIELHTYSTQILKYLDNIQKLKGDCNDLVKDCKELRELSTALYDLKIQITSVINRENDISNNIDIVSNKLNEIDAIQYNFEKYKEIFDNVEEYKTLDDTKNAYIVKKAEILKNVDINKTKEDLDIYFNDLDELEKSLTLSSNEMEIKTIVQNSYNSFSDINKNINDIDKEMKTLIPMLDELLNEGHNIDISLYNFIIRNIQIKIGNDIKNIREQENDTNICFEYIQNNYNFIKSDISIFNKYDDHIKVDNYISNNIDVVNKHNSLLSEHVINATNIIENIMTSIVEINEDTEMNSLEETQDKLLELYENFKKEKNIINNNYKIVHFNKLKEIENSLETYNSISTNFNKINETQNIDILKNEFNNIKTKINDKVKELVHVDSTLTLESIQTFNNLYGDLMSNIQDVYKYEDINNVELKKVKLYIENITNLLGRINTFIKELDKYQDENNGIDKYIEINKENNSYIIKLKEKANNLKENFSKLLQNIKRNETELYNINNIKDDIMNTGKSVNNIKQKFSSNLPLKEKLFQMEEMLLNINNIMNETKRISNTAAYTNITLQDIENNKNKENNNMNIETIDKLIDHIKIHNEKIQAEILIIDDAKRKVKEITDNINKAFNEITENYNNENNGVIKSAKNIVDEATYLNNELDKFLLKLNELLSHNNNDIKDLGDEKLILKEEEERKERERLEKAKQEEERKERERIEKEKQEKERLEREKQEQLKKEEELRKKEQERQEQQQKEEALKRQEQERLQKEEELKRQEQERLEREKQEQLQKEEELKRQEQERLQKEEALKRQEQERLQKEEELKRQEQERLEREKQEQLQKEEELKRQEQERLQKEEALKRQEQERLQKEEELKRQEQERLERKKIELAEREQHIKSKLESDMVKIIKDELTKEKDEIIKNKDIKLRHSLEQKWLKHLQNILSLKIDSLLNKNDEVIKDNETQLKTNILNSLKNQLYLNLKRELNEIIKEYEENQKKILHSNQLVNDSLEQKTNRLVDIKPTKHGDIYTNKLSDNETEMLITSKEKKDETESTKRSGTDHTNSSESTTDDNTNDRNFSRSKNLSVAIYTAGSVALCVLIFSSIGLLLIKTNSGDNNSNEINEAFEPNDDVLFKEKDEIIEITFNDNDSTI</sequence>
<organism>
    <name type="scientific">Plasmodium falciparum (isolate 3D7)</name>
    <dbReference type="NCBI Taxonomy" id="36329"/>
    <lineage>
        <taxon>Eukaryota</taxon>
        <taxon>Sar</taxon>
        <taxon>Alveolata</taxon>
        <taxon>Apicomplexa</taxon>
        <taxon>Aconoidasida</taxon>
        <taxon>Haemosporida</taxon>
        <taxon>Plasmodiidae</taxon>
        <taxon>Plasmodium</taxon>
        <taxon>Plasmodium (Laverania)</taxon>
    </lineage>
</organism>
<reference evidence="13" key="1">
    <citation type="journal article" date="2001" name="Infect. Immun.">
        <title>Identification of proteins from Plasmodium falciparum that are homologous to reticulocyte binding proteins in Plasmodium vivax.</title>
        <authorList>
            <person name="Triglia T."/>
            <person name="Thompson J."/>
            <person name="Caruana S.R."/>
            <person name="Delorenzi M."/>
            <person name="Speed T."/>
            <person name="Cowman A.F."/>
        </authorList>
    </citation>
    <scope>NUCLEOTIDE SEQUENCE [GENOMIC DNA]</scope>
</reference>
<reference evidence="14" key="2">
    <citation type="journal article" date="2005" name="Am. J. Trop. Med. Hyg.">
        <title>Dramatic difference in diversity between Plasmodium falciparum and Plasmodium vivax reticulocyte binding-like genes.</title>
        <authorList>
            <person name="Rayner J.C."/>
            <person name="Tran T.M."/>
            <person name="Corredor V."/>
            <person name="Huber C.S."/>
            <person name="Barnwell J.W."/>
            <person name="Galinski M.R."/>
        </authorList>
    </citation>
    <scope>NUCLEOTIDE SEQUENCE [GENOMIC DNA]</scope>
    <source>
        <strain evidence="14">3D7</strain>
    </source>
</reference>
<reference key="3">
    <citation type="journal article" date="2002" name="Nature">
        <title>Genome sequence of the human malaria parasite Plasmodium falciparum.</title>
        <authorList>
            <person name="Gardner M.J."/>
            <person name="Hall N."/>
            <person name="Fung E."/>
            <person name="White O."/>
            <person name="Berriman M."/>
            <person name="Hyman R.W."/>
            <person name="Carlton J.M."/>
            <person name="Pain A."/>
            <person name="Nelson K.E."/>
            <person name="Bowman S."/>
            <person name="Paulsen I.T."/>
            <person name="James K.D."/>
            <person name="Eisen J.A."/>
            <person name="Rutherford K.M."/>
            <person name="Salzberg S.L."/>
            <person name="Craig A."/>
            <person name="Kyes S."/>
            <person name="Chan M.-S."/>
            <person name="Nene V."/>
            <person name="Shallom S.J."/>
            <person name="Suh B."/>
            <person name="Peterson J."/>
            <person name="Angiuoli S."/>
            <person name="Pertea M."/>
            <person name="Allen J."/>
            <person name="Selengut J."/>
            <person name="Haft D."/>
            <person name="Mather M.W."/>
            <person name="Vaidya A.B."/>
            <person name="Martin D.M.A."/>
            <person name="Fairlamb A.H."/>
            <person name="Fraunholz M.J."/>
            <person name="Roos D.S."/>
            <person name="Ralph S.A."/>
            <person name="McFadden G.I."/>
            <person name="Cummings L.M."/>
            <person name="Subramanian G.M."/>
            <person name="Mungall C."/>
            <person name="Venter J.C."/>
            <person name="Carucci D.J."/>
            <person name="Hoffman S.L."/>
            <person name="Newbold C."/>
            <person name="Davis R.W."/>
            <person name="Fraser C.M."/>
            <person name="Barrell B.G."/>
        </authorList>
    </citation>
    <scope>NUCLEOTIDE SEQUENCE [LARGE SCALE GENOMIC DNA]</scope>
    <source>
        <strain>3D7</strain>
    </source>
</reference>
<reference evidence="15" key="4">
    <citation type="journal article" date="2002" name="Nature">
        <title>Sequence of Plasmodium falciparum chromosomes 1, 3-9 and 13.</title>
        <authorList>
            <person name="Hall N."/>
            <person name="Pain A."/>
            <person name="Berriman M."/>
            <person name="Churcher C.M."/>
            <person name="Harris B."/>
            <person name="Harris D."/>
            <person name="Mungall K.L."/>
            <person name="Bowman S."/>
            <person name="Atkin R."/>
            <person name="Baker S."/>
            <person name="Barron A."/>
            <person name="Brooks K."/>
            <person name="Buckee C.O."/>
            <person name="Burrows C."/>
            <person name="Cherevach I."/>
            <person name="Chillingworth C."/>
            <person name="Chillingworth T."/>
            <person name="Christodoulou Z."/>
            <person name="Clark L."/>
            <person name="Clark R."/>
            <person name="Corton C."/>
            <person name="Cronin A."/>
            <person name="Davies R.M."/>
            <person name="Davis P."/>
            <person name="Dear P."/>
            <person name="Dearden F."/>
            <person name="Doggett J."/>
            <person name="Feltwell T."/>
            <person name="Goble A."/>
            <person name="Goodhead I."/>
            <person name="Gwilliam R."/>
            <person name="Hamlin N."/>
            <person name="Hance Z."/>
            <person name="Harper D."/>
            <person name="Hauser H."/>
            <person name="Hornsby T."/>
            <person name="Holroyd S."/>
            <person name="Horrocks P."/>
            <person name="Humphray S."/>
            <person name="Jagels K."/>
            <person name="James K.D."/>
            <person name="Johnson D."/>
            <person name="Kerhornou A."/>
            <person name="Knights A."/>
            <person name="Konfortov B."/>
            <person name="Kyes S."/>
            <person name="Larke N."/>
            <person name="Lawson D."/>
            <person name="Lennard N."/>
            <person name="Line A."/>
            <person name="Maddison M."/>
            <person name="Mclean J."/>
            <person name="Mooney P."/>
            <person name="Moule S."/>
            <person name="Murphy L."/>
            <person name="Oliver K."/>
            <person name="Ormond D."/>
            <person name="Price C."/>
            <person name="Quail M.A."/>
            <person name="Rabbinowitsch E."/>
            <person name="Rajandream M.A."/>
            <person name="Rutter S."/>
            <person name="Rutherford K.M."/>
            <person name="Sanders M."/>
            <person name="Simmonds M."/>
            <person name="Seeger K."/>
            <person name="Sharp S."/>
            <person name="Smith R."/>
            <person name="Squares R."/>
            <person name="Squares S."/>
            <person name="Stevens K."/>
            <person name="Taylor K."/>
            <person name="Tivey A."/>
            <person name="Unwin L."/>
            <person name="Whitehead S."/>
            <person name="Woodward J.R."/>
            <person name="Sulston J.E."/>
            <person name="Craig A."/>
            <person name="Newbold C."/>
            <person name="Barrell B.G."/>
        </authorList>
    </citation>
    <scope>NUCLEOTIDE SEQUENCE [LARGE SCALE GENOMIC DNA]</scope>
    <source>
        <strain>3D7</strain>
    </source>
</reference>
<reference key="5">
    <citation type="journal article" date="2002" name="Infect. Immun.">
        <title>Variation in the expression of a Plasmodium falciparum protein family implicated in erythrocyte invasion.</title>
        <authorList>
            <person name="Taylor H.M."/>
            <person name="Grainger M."/>
            <person name="Holder A.A."/>
        </authorList>
    </citation>
    <scope>SUBCELLULAR LOCATION</scope>
    <scope>DEVELOPMENTAL STAGE</scope>
    <scope>PROTEOLYTIC CLEAVAGE</scope>
</reference>
<reference key="6">
    <citation type="journal article" date="2003" name="EMBO J.">
        <title>Phenotypic variation of Plasmodium falciparum merozoite proteins directs receptor targeting for invasion of human erythrocytes.</title>
        <authorList>
            <person name="Duraisingh M.T."/>
            <person name="Triglia T."/>
            <person name="Ralph S.A."/>
            <person name="Rayner J.C."/>
            <person name="Barnwell J.W."/>
            <person name="McFadden G.I."/>
            <person name="Cowman A.F."/>
        </authorList>
    </citation>
    <scope>FUNCTION</scope>
    <scope>DEVELOPMENTAL STAGE</scope>
    <scope>DISRUPTION PHENOTYPE</scope>
</reference>
<reference evidence="11" key="7">
    <citation type="journal article" date="2007" name="PLoS ONE">
        <title>Rapid identification of malaria vaccine candidates based on alpha-helical coiled coil protein motif.</title>
        <authorList>
            <person name="Villard V."/>
            <person name="Agak G.W."/>
            <person name="Frank G."/>
            <person name="Jafarshad A."/>
            <person name="Servis C."/>
            <person name="Nebie I."/>
            <person name="Sirima S.B."/>
            <person name="Felger I."/>
            <person name="Arevalo-Herrera M."/>
            <person name="Herrera S."/>
            <person name="Heitz F."/>
            <person name="Baecker V."/>
            <person name="Druilhe P."/>
            <person name="Kajava A.V."/>
            <person name="Corradin G."/>
        </authorList>
    </citation>
    <scope>SYNTHESIS OF 2144-2180</scope>
    <scope>POSSIBLE CANDIDATE MALARIA EPITOPE</scope>
</reference>
<reference key="8">
    <citation type="journal article" date="2011" name="Infect. Immun.">
        <title>Differences in erythrocyte receptor specificity of different parts of the Plasmodium falciparum reticulocyte binding protein homologue 2a.</title>
        <authorList>
            <person name="Gunalan K."/>
            <person name="Gao X."/>
            <person name="Liew K.J."/>
            <person name="Preiser P.R."/>
        </authorList>
    </citation>
    <scope>FUNCTION</scope>
    <scope>SUBCELLULAR LOCATION</scope>
    <scope>DEVELOPMENTAL STAGE</scope>
    <scope>PROTEOLYTIC CLEAVAGE</scope>
</reference>
<reference key="9">
    <citation type="journal article" date="2011" name="PLoS Pathog.">
        <title>Plasmodium falciparum merozoite invasion is inhibited by antibodies that target the PfRh2a and b binding domains.</title>
        <authorList>
            <person name="Triglia T."/>
            <person name="Chen L."/>
            <person name="Lopaticki S."/>
            <person name="Dekiwadia C."/>
            <person name="Riglar D.T."/>
            <person name="Hodder A.N."/>
            <person name="Ralph S.A."/>
            <person name="Baum J."/>
            <person name="Cowman A.F."/>
        </authorList>
    </citation>
    <scope>FUNCTION</scope>
    <scope>SUBUNIT</scope>
    <scope>SUBCELLULAR LOCATION</scope>
    <scope>DEVELOPMENTAL STAGE</scope>
    <scope>PROTEOLYTIC CLEAVAGE</scope>
</reference>
<proteinExistence type="evidence at protein level"/>
<keyword id="KW-0965">Cell junction</keyword>
<keyword id="KW-1003">Cell membrane</keyword>
<keyword id="KW-0175">Coiled coil</keyword>
<keyword id="KW-0968">Cytoplasmic vesicle</keyword>
<keyword id="KW-0325">Glycoprotein</keyword>
<keyword id="KW-0433">Leucine-rich repeat</keyword>
<keyword id="KW-0472">Membrane</keyword>
<keyword id="KW-0477">Merozoite</keyword>
<keyword id="KW-0675">Receptor</keyword>
<keyword id="KW-1185">Reference proteome</keyword>
<keyword id="KW-0677">Repeat</keyword>
<keyword id="KW-0964">Secreted</keyword>
<keyword id="KW-0732">Signal</keyword>
<keyword id="KW-0796">Tight junction</keyword>
<keyword id="KW-0812">Transmembrane</keyword>
<keyword id="KW-1133">Transmembrane helix</keyword>
<evidence type="ECO:0000255" key="1"/>
<evidence type="ECO:0000255" key="2">
    <source>
        <dbReference type="PROSITE-ProRule" id="PRU00498"/>
    </source>
</evidence>
<evidence type="ECO:0000256" key="3">
    <source>
        <dbReference type="SAM" id="MobiDB-lite"/>
    </source>
</evidence>
<evidence type="ECO:0000269" key="4">
    <source>
    </source>
</evidence>
<evidence type="ECO:0000269" key="5">
    <source>
    </source>
</evidence>
<evidence type="ECO:0000269" key="6">
    <source>
    </source>
</evidence>
<evidence type="ECO:0000269" key="7">
    <source>
    </source>
</evidence>
<evidence type="ECO:0000269" key="8">
    <source>
    </source>
</evidence>
<evidence type="ECO:0000303" key="9">
    <source>
    </source>
</evidence>
<evidence type="ECO:0000303" key="10">
    <source>
    </source>
</evidence>
<evidence type="ECO:0000305" key="11"/>
<evidence type="ECO:0000305" key="12">
    <source>
    </source>
</evidence>
<evidence type="ECO:0000312" key="13">
    <source>
        <dbReference type="EMBL" id="AAK19244.1"/>
    </source>
</evidence>
<evidence type="ECO:0000312" key="14">
    <source>
        <dbReference type="EMBL" id="AAN39443.1"/>
    </source>
</evidence>
<evidence type="ECO:0000312" key="15">
    <source>
        <dbReference type="EMBL" id="CAD52492.1"/>
    </source>
</evidence>
<dbReference type="EMBL" id="AF312916">
    <property type="protein sequence ID" value="AAK19244.1"/>
    <property type="molecule type" value="Genomic_DNA"/>
</dbReference>
<dbReference type="EMBL" id="AY138496">
    <property type="protein sequence ID" value="AAN39443.1"/>
    <property type="molecule type" value="Genomic_DNA"/>
</dbReference>
<dbReference type="EMBL" id="AL844509">
    <property type="protein sequence ID" value="CAD52492.1"/>
    <property type="molecule type" value="Genomic_DNA"/>
</dbReference>
<dbReference type="RefSeq" id="XP_001350083.1">
    <property type="nucleotide sequence ID" value="XM_001350047.1"/>
</dbReference>
<dbReference type="SMR" id="Q8IDX6"/>
<dbReference type="BioGRID" id="1209422">
    <property type="interactions" value="13"/>
</dbReference>
<dbReference type="FunCoup" id="Q8IDX6">
    <property type="interactions" value="1"/>
</dbReference>
<dbReference type="IntAct" id="Q8IDX6">
    <property type="interactions" value="14"/>
</dbReference>
<dbReference type="STRING" id="36329.Q8IDX6"/>
<dbReference type="GlyCosmos" id="Q8IDX6">
    <property type="glycosylation" value="41 sites, No reported glycans"/>
</dbReference>
<dbReference type="PaxDb" id="5833-PF13_0198"/>
<dbReference type="EnsemblProtists" id="CAD52492">
    <property type="protein sequence ID" value="CAD52492"/>
    <property type="gene ID" value="PF3D7_1335400"/>
</dbReference>
<dbReference type="GeneID" id="814167"/>
<dbReference type="KEGG" id="pfa:PF3D7_1335400"/>
<dbReference type="VEuPathDB" id="PlasmoDB:PF3D7_1335400"/>
<dbReference type="VEuPathDB" id="PlasmoDB:Pf7G8-2_000438000"/>
<dbReference type="VEuPathDB" id="PlasmoDB:Pf7G8_130039700"/>
<dbReference type="VEuPathDB" id="PlasmoDB:Pf7G8_130039800"/>
<dbReference type="VEuPathDB" id="PlasmoDB:PfCD01_130041000"/>
<dbReference type="VEuPathDB" id="PlasmoDB:PfDd2_130041200"/>
<dbReference type="VEuPathDB" id="PlasmoDB:PfGA01_130041500"/>
<dbReference type="VEuPathDB" id="PlasmoDB:PfGB4_130041200"/>
<dbReference type="VEuPathDB" id="PlasmoDB:PfGB4_130041300"/>
<dbReference type="VEuPathDB" id="PlasmoDB:PfGN01_130042100"/>
<dbReference type="VEuPathDB" id="PlasmoDB:PfHB3_130041600"/>
<dbReference type="VEuPathDB" id="PlasmoDB:PfHB3_130041700"/>
<dbReference type="VEuPathDB" id="PlasmoDB:PfIT_130040700"/>
<dbReference type="VEuPathDB" id="PlasmoDB:PfKE01_130040900"/>
<dbReference type="VEuPathDB" id="PlasmoDB:PfKH01_130039400"/>
<dbReference type="VEuPathDB" id="PlasmoDB:PfKH02_130038200"/>
<dbReference type="VEuPathDB" id="PlasmoDB:PfKH02_130038300"/>
<dbReference type="VEuPathDB" id="PlasmoDB:PfNF135_130039900"/>
<dbReference type="VEuPathDB" id="PlasmoDB:PfNF166_130040500"/>
<dbReference type="VEuPathDB" id="PlasmoDB:PfNF54_130040300"/>
<dbReference type="VEuPathDB" id="PlasmoDB:PfSD01_130042000"/>
<dbReference type="VEuPathDB" id="PlasmoDB:PfSN01_130038400"/>
<dbReference type="VEuPathDB" id="PlasmoDB:PfTG01_130041000"/>
<dbReference type="VEuPathDB" id="PlasmoDB:PfTG01_130041100"/>
<dbReference type="HOGENOM" id="CLU_225324_0_0_1"/>
<dbReference type="InParanoid" id="Q8IDX6"/>
<dbReference type="OMA" id="CKLERGY"/>
<dbReference type="OrthoDB" id="376720at2759"/>
<dbReference type="PhylomeDB" id="Q8IDX6"/>
<dbReference type="Proteomes" id="UP000001450">
    <property type="component" value="Chromosome 13"/>
</dbReference>
<dbReference type="GO" id="GO:0016324">
    <property type="term" value="C:apical plasma membrane"/>
    <property type="evidence" value="ECO:0000314"/>
    <property type="project" value="UniProtKB"/>
</dbReference>
<dbReference type="GO" id="GO:0031410">
    <property type="term" value="C:cytoplasmic vesicle"/>
    <property type="evidence" value="ECO:0007669"/>
    <property type="project" value="UniProtKB-KW"/>
</dbReference>
<dbReference type="GO" id="GO:0005615">
    <property type="term" value="C:extracellular space"/>
    <property type="evidence" value="ECO:0000314"/>
    <property type="project" value="UniProtKB"/>
</dbReference>
<dbReference type="GO" id="GO:0044647">
    <property type="term" value="C:host-symbiont bicellular tight junction"/>
    <property type="evidence" value="ECO:0000315"/>
    <property type="project" value="UniProtKB"/>
</dbReference>
<dbReference type="GO" id="GO:0016020">
    <property type="term" value="C:membrane"/>
    <property type="evidence" value="ECO:0000250"/>
    <property type="project" value="UniProtKB"/>
</dbReference>
<dbReference type="GO" id="GO:1990225">
    <property type="term" value="C:rhoptry neck"/>
    <property type="evidence" value="ECO:0000314"/>
    <property type="project" value="UniProtKB"/>
</dbReference>
<dbReference type="GO" id="GO:0008201">
    <property type="term" value="F:heparin binding"/>
    <property type="evidence" value="ECO:0000314"/>
    <property type="project" value="GeneDB"/>
</dbReference>
<dbReference type="GO" id="GO:0046789">
    <property type="term" value="F:host cell surface receptor binding"/>
    <property type="evidence" value="ECO:0000315"/>
    <property type="project" value="UniProtKB"/>
</dbReference>
<dbReference type="GO" id="GO:0098609">
    <property type="term" value="P:cell-cell adhesion"/>
    <property type="evidence" value="ECO:0000250"/>
    <property type="project" value="UniProtKB"/>
</dbReference>
<dbReference type="PANTHER" id="PTHR13270">
    <property type="entry name" value="PROTEIN C20ORF116-RELATED"/>
    <property type="match status" value="1"/>
</dbReference>
<dbReference type="PANTHER" id="PTHR13270:SF14">
    <property type="entry name" value="SEX DETERMINATION AND DOSAGE COMPENSATION PROTEIN SDC-2"/>
    <property type="match status" value="1"/>
</dbReference>
<protein>
    <recommendedName>
        <fullName evidence="9">Reticulocyte-binding protein homolog 2a</fullName>
        <shortName evidence="9">PfR2Ha</shortName>
        <shortName evidence="10">PfRH2a</shortName>
    </recommendedName>
    <component>
        <recommendedName>
            <fullName evidence="11">Reticulocyte-binding protein homolog 2a 85 kDa form</fullName>
        </recommendedName>
    </component>
    <component>
        <recommendedName>
            <fullName evidence="11">Reticulocyte-binding protein homolog 2a 285 kDa form</fullName>
        </recommendedName>
    </component>
</protein>
<gene>
    <name evidence="10" type="primary">RH2a</name>
    <name type="ORF">PF13_0198</name>
    <name type="ORF">PF3D7_1335400</name>
</gene>
<accession>Q8IDX6</accession>
<accession>Q7JU29</accession>
<accession>Q9BK46</accession>
<feature type="signal peptide" evidence="1">
    <location>
        <begin position="1"/>
        <end position="24"/>
    </location>
</feature>
<feature type="chain" id="PRO_0000371501" description="Reticulocyte-binding protein homolog 2a" evidence="1">
    <location>
        <begin position="25"/>
        <end position="3130"/>
    </location>
</feature>
<feature type="chain" id="PRO_0000453540" description="Reticulocyte-binding protein homolog 2a 85 kDa form" evidence="8">
    <location>
        <begin position="25"/>
        <end status="unknown"/>
    </location>
</feature>
<feature type="chain" id="PRO_0000453541" description="Reticulocyte-binding protein homolog 2a 285 kDa form" evidence="8">
    <location>
        <begin status="unknown"/>
        <end position="3130"/>
    </location>
</feature>
<feature type="topological domain" description="Extracellular" evidence="11">
    <location>
        <begin position="25"/>
        <end position="3066"/>
    </location>
</feature>
<feature type="transmembrane region" description="Helical" evidence="1">
    <location>
        <begin position="3067"/>
        <end position="3087"/>
    </location>
</feature>
<feature type="topological domain" description="Cytoplasmic" evidence="11">
    <location>
        <begin position="3088"/>
        <end position="3130"/>
    </location>
</feature>
<feature type="repeat" description="LRR 1" evidence="1">
    <location>
        <begin position="182"/>
        <end position="206"/>
    </location>
</feature>
<feature type="repeat" description="LRR 2" evidence="1">
    <location>
        <begin position="300"/>
        <end position="323"/>
    </location>
</feature>
<feature type="repeat" description="LRR 3" evidence="1">
    <location>
        <begin position="419"/>
        <end position="443"/>
    </location>
</feature>
<feature type="repeat" description="LRR 4" evidence="1">
    <location>
        <begin position="659"/>
        <end position="683"/>
    </location>
</feature>
<feature type="repeat" description="LRR 5" evidence="1">
    <location>
        <begin position="757"/>
        <end position="778"/>
    </location>
</feature>
<feature type="repeat" description="LRR 6" evidence="1">
    <location>
        <begin position="801"/>
        <end position="824"/>
    </location>
</feature>
<feature type="repeat" description="LRR 7" evidence="1">
    <location>
        <begin position="1116"/>
        <end position="1139"/>
    </location>
</feature>
<feature type="repeat" description="LRR 8" evidence="1">
    <location>
        <begin position="1305"/>
        <end position="1328"/>
    </location>
</feature>
<feature type="repeat" description="LRR 9" evidence="1">
    <location>
        <begin position="1336"/>
        <end position="1362"/>
    </location>
</feature>
<feature type="repeat" description="LRR 10" evidence="1">
    <location>
        <begin position="1438"/>
        <end position="1461"/>
    </location>
</feature>
<feature type="repeat" description="LRR 11" evidence="1">
    <location>
        <begin position="1536"/>
        <end position="1561"/>
    </location>
</feature>
<feature type="repeat" description="LRR 12" evidence="1">
    <location>
        <begin position="1628"/>
        <end position="1652"/>
    </location>
</feature>
<feature type="repeat" description="LRR 13" evidence="1">
    <location>
        <begin position="1795"/>
        <end position="1818"/>
    </location>
</feature>
<feature type="repeat" description="LRR 14" evidence="1">
    <location>
        <begin position="1890"/>
        <end position="1913"/>
    </location>
</feature>
<feature type="repeat" description="LRR 15" evidence="1">
    <location>
        <begin position="2014"/>
        <end position="2041"/>
    </location>
</feature>
<feature type="repeat" description="LRR 16" evidence="1">
    <location>
        <begin position="2052"/>
        <end position="2076"/>
    </location>
</feature>
<feature type="repeat" description="LRR 17" evidence="1">
    <location>
        <begin position="2126"/>
        <end position="2152"/>
    </location>
</feature>
<feature type="repeat" description="LRR 18" evidence="1">
    <location>
        <begin position="2345"/>
        <end position="2368"/>
    </location>
</feature>
<feature type="repeat" description="LRR 19" evidence="1">
    <location>
        <begin position="2409"/>
        <end position="2434"/>
    </location>
</feature>
<feature type="repeat" description="LRR 20" evidence="1">
    <location>
        <begin position="2522"/>
        <end position="2545"/>
    </location>
</feature>
<feature type="repeat" description="LRR 21" evidence="1">
    <location>
        <begin position="2572"/>
        <end position="2599"/>
    </location>
</feature>
<feature type="repeat" description="LRR 22" evidence="1">
    <location>
        <begin position="2650"/>
        <end position="2671"/>
    </location>
</feature>
<feature type="repeat" description="LRR 23" evidence="1">
    <location>
        <begin position="2915"/>
        <end position="2936"/>
    </location>
</feature>
<feature type="repeat" description="LRR 24" evidence="1">
    <location>
        <begin position="2937"/>
        <end position="2959"/>
    </location>
</feature>
<feature type="region of interest" description="Erythrocyte binding domain (EBD)" evidence="8">
    <location>
        <begin position="446"/>
        <end position="557"/>
    </location>
</feature>
<feature type="region of interest" description="Disordered" evidence="3">
    <location>
        <begin position="1173"/>
        <end position="1195"/>
    </location>
</feature>
<feature type="region of interest" description="Disordered" evidence="3">
    <location>
        <begin position="2680"/>
        <end position="2753"/>
    </location>
</feature>
<feature type="region of interest" description="Disordered" evidence="3">
    <location>
        <begin position="3021"/>
        <end position="3056"/>
    </location>
</feature>
<feature type="coiled-coil region" evidence="1">
    <location>
        <begin position="490"/>
        <end position="517"/>
    </location>
</feature>
<feature type="coiled-coil region" evidence="1">
    <location>
        <begin position="1805"/>
        <end position="1842"/>
    </location>
</feature>
<feature type="coiled-coil region" evidence="1">
    <location>
        <begin position="2661"/>
        <end position="2874"/>
    </location>
</feature>
<feature type="compositionally biased region" description="Basic and acidic residues" evidence="3">
    <location>
        <begin position="1173"/>
        <end position="1185"/>
    </location>
</feature>
<feature type="compositionally biased region" description="Basic and acidic residues" evidence="3">
    <location>
        <begin position="3023"/>
        <end position="3038"/>
    </location>
</feature>
<feature type="compositionally biased region" description="Low complexity" evidence="3">
    <location>
        <begin position="3039"/>
        <end position="3050"/>
    </location>
</feature>
<feature type="glycosylation site" description="N-linked (GlcNAc...) asparagine" evidence="2">
    <location>
        <position position="43"/>
    </location>
</feature>
<feature type="glycosylation site" description="N-linked (GlcNAc...) asparagine" evidence="2">
    <location>
        <position position="105"/>
    </location>
</feature>
<feature type="glycosylation site" description="N-linked (GlcNAc...) asparagine" evidence="2">
    <location>
        <position position="123"/>
    </location>
</feature>
<feature type="glycosylation site" description="N-linked (GlcNAc...) asparagine" evidence="2">
    <location>
        <position position="159"/>
    </location>
</feature>
<feature type="glycosylation site" description="N-linked (GlcNAc...) asparagine" evidence="2">
    <location>
        <position position="575"/>
    </location>
</feature>
<feature type="glycosylation site" description="N-linked (GlcNAc...) asparagine" evidence="2">
    <location>
        <position position="579"/>
    </location>
</feature>
<feature type="glycosylation site" description="N-linked (GlcNAc...) asparagine" evidence="2">
    <location>
        <position position="635"/>
    </location>
</feature>
<feature type="glycosylation site" description="N-linked (GlcNAc...) asparagine" evidence="2">
    <location>
        <position position="675"/>
    </location>
</feature>
<feature type="glycosylation site" description="N-linked (GlcNAc...) asparagine" evidence="2">
    <location>
        <position position="724"/>
    </location>
</feature>
<feature type="glycosylation site" description="N-linked (GlcNAc...) asparagine" evidence="2">
    <location>
        <position position="745"/>
    </location>
</feature>
<feature type="glycosylation site" description="N-linked (GlcNAc...) asparagine" evidence="2">
    <location>
        <position position="781"/>
    </location>
</feature>
<feature type="glycosylation site" description="N-linked (GlcNAc...) asparagine" evidence="2">
    <location>
        <position position="837"/>
    </location>
</feature>
<feature type="glycosylation site" description="N-linked (GlcNAc...) asparagine" evidence="2">
    <location>
        <position position="994"/>
    </location>
</feature>
<feature type="glycosylation site" description="N-linked (GlcNAc...) asparagine" evidence="2">
    <location>
        <position position="1166"/>
    </location>
</feature>
<feature type="glycosylation site" description="N-linked (GlcNAc...) asparagine" evidence="2">
    <location>
        <position position="1320"/>
    </location>
</feature>
<feature type="glycosylation site" description="N-linked (GlcNAc...) asparagine" evidence="2">
    <location>
        <position position="1332"/>
    </location>
</feature>
<feature type="glycosylation site" description="N-linked (GlcNAc...) asparagine" evidence="2">
    <location>
        <position position="1398"/>
    </location>
</feature>
<feature type="glycosylation site" description="N-linked (GlcNAc...) asparagine" evidence="2">
    <location>
        <position position="1409"/>
    </location>
</feature>
<feature type="glycosylation site" description="N-linked (GlcNAc...) asparagine" evidence="2">
    <location>
        <position position="1513"/>
    </location>
</feature>
<feature type="glycosylation site" description="N-linked (GlcNAc...) asparagine" evidence="2">
    <location>
        <position position="1705"/>
    </location>
</feature>
<feature type="glycosylation site" description="N-linked (GlcNAc...) asparagine" evidence="2">
    <location>
        <position position="1742"/>
    </location>
</feature>
<feature type="glycosylation site" description="N-linked (GlcNAc...) asparagine" evidence="2">
    <location>
        <position position="1785"/>
    </location>
</feature>
<feature type="glycosylation site" description="N-linked (GlcNAc...) asparagine" evidence="2">
    <location>
        <position position="1900"/>
    </location>
</feature>
<feature type="glycosylation site" description="N-linked (GlcNAc...) asparagine" evidence="2">
    <location>
        <position position="1927"/>
    </location>
</feature>
<feature type="glycosylation site" description="N-linked (GlcNAc...) asparagine" evidence="2">
    <location>
        <position position="1971"/>
    </location>
</feature>
<feature type="glycosylation site" description="N-linked (GlcNAc...) asparagine" evidence="2">
    <location>
        <position position="2113"/>
    </location>
</feature>
<feature type="glycosylation site" description="N-linked (GlcNAc...) asparagine" evidence="2">
    <location>
        <position position="2212"/>
    </location>
</feature>
<feature type="glycosylation site" description="N-linked (GlcNAc...) asparagine" evidence="2">
    <location>
        <position position="2268"/>
    </location>
</feature>
<feature type="glycosylation site" description="N-linked (GlcNAc...) asparagine" evidence="2">
    <location>
        <position position="2346"/>
    </location>
</feature>
<feature type="glycosylation site" description="N-linked (GlcNAc...) asparagine" evidence="2">
    <location>
        <position position="2421"/>
    </location>
</feature>
<feature type="glycosylation site" description="N-linked (GlcNAc...) asparagine" evidence="2">
    <location>
        <position position="2456"/>
    </location>
</feature>
<feature type="glycosylation site" description="N-linked (GlcNAc...) asparagine" evidence="2">
    <location>
        <position position="2473"/>
    </location>
</feature>
<feature type="glycosylation site" description="N-linked (GlcNAc...) asparagine" evidence="2">
    <location>
        <position position="2484"/>
    </location>
</feature>
<feature type="glycosylation site" description="N-linked (GlcNAc...) asparagine" evidence="2">
    <location>
        <position position="2537"/>
    </location>
</feature>
<feature type="glycosylation site" description="N-linked (GlcNAc...) asparagine" evidence="2">
    <location>
        <position position="2550"/>
    </location>
</feature>
<feature type="glycosylation site" description="N-linked (GlcNAc...) asparagine" evidence="2">
    <location>
        <position position="2940"/>
    </location>
</feature>
<feature type="glycosylation site" description="N-linked (GlcNAc...) asparagine" evidence="2">
    <location>
        <position position="2986"/>
    </location>
</feature>
<feature type="glycosylation site" description="N-linked (GlcNAc...) asparagine" evidence="2">
    <location>
        <position position="3015"/>
    </location>
</feature>
<feature type="glycosylation site" description="N-linked (GlcNAc...) asparagine" evidence="2">
    <location>
        <position position="3042"/>
    </location>
</feature>
<feature type="glycosylation site" description="N-linked (GlcNAc...) asparagine" evidence="2">
    <location>
        <position position="3056"/>
    </location>
</feature>
<feature type="glycosylation site" description="N-linked (GlcNAc...) asparagine" evidence="2">
    <location>
        <position position="3062"/>
    </location>
</feature>
<feature type="sequence conflict" description="In Ref. 1; AAK19244." evidence="11" ref="1">
    <original>I</original>
    <variation>L</variation>
    <location>
        <position position="1766"/>
    </location>
</feature>
<feature type="sequence conflict" description="In Ref. 1; AAK19244." evidence="11" ref="1">
    <original>E</original>
    <variation>D</variation>
    <location>
        <position position="3029"/>
    </location>
</feature>